<dbReference type="EC" id="3.1.2.6" evidence="1"/>
<dbReference type="EMBL" id="CP000627">
    <property type="protein sequence ID" value="ABQ19624.1"/>
    <property type="molecule type" value="Genomic_DNA"/>
</dbReference>
<dbReference type="EMBL" id="CP001235">
    <property type="protein sequence ID" value="ACP10342.1"/>
    <property type="molecule type" value="Genomic_DNA"/>
</dbReference>
<dbReference type="RefSeq" id="WP_000939287.1">
    <property type="nucleotide sequence ID" value="NZ_JAACZH010000022.1"/>
</dbReference>
<dbReference type="SMR" id="A5F635"/>
<dbReference type="GeneID" id="69719138"/>
<dbReference type="KEGG" id="vco:VC0395_A1828"/>
<dbReference type="KEGG" id="vcr:VC395_2352"/>
<dbReference type="PATRIC" id="fig|345073.21.peg.2268"/>
<dbReference type="eggNOG" id="COG0491">
    <property type="taxonomic scope" value="Bacteria"/>
</dbReference>
<dbReference type="HOGENOM" id="CLU_030571_4_1_6"/>
<dbReference type="OrthoDB" id="9802248at2"/>
<dbReference type="UniPathway" id="UPA00619">
    <property type="reaction ID" value="UER00676"/>
</dbReference>
<dbReference type="Proteomes" id="UP000000249">
    <property type="component" value="Chromosome 2"/>
</dbReference>
<dbReference type="GO" id="GO:0004416">
    <property type="term" value="F:hydroxyacylglutathione hydrolase activity"/>
    <property type="evidence" value="ECO:0007669"/>
    <property type="project" value="UniProtKB-UniRule"/>
</dbReference>
<dbReference type="GO" id="GO:0046872">
    <property type="term" value="F:metal ion binding"/>
    <property type="evidence" value="ECO:0007669"/>
    <property type="project" value="UniProtKB-KW"/>
</dbReference>
<dbReference type="GO" id="GO:0019243">
    <property type="term" value="P:methylglyoxal catabolic process to D-lactate via S-lactoyl-glutathione"/>
    <property type="evidence" value="ECO:0007669"/>
    <property type="project" value="InterPro"/>
</dbReference>
<dbReference type="CDD" id="cd07723">
    <property type="entry name" value="hydroxyacylglutathione_hydrolase_MBL-fold"/>
    <property type="match status" value="1"/>
</dbReference>
<dbReference type="Gene3D" id="3.60.15.10">
    <property type="entry name" value="Ribonuclease Z/Hydroxyacylglutathione hydrolase-like"/>
    <property type="match status" value="1"/>
</dbReference>
<dbReference type="HAMAP" id="MF_01374">
    <property type="entry name" value="Glyoxalase_2"/>
    <property type="match status" value="1"/>
</dbReference>
<dbReference type="InterPro" id="IPR035680">
    <property type="entry name" value="Clx_II_MBL"/>
</dbReference>
<dbReference type="InterPro" id="IPR050110">
    <property type="entry name" value="Glyoxalase_II_hydrolase"/>
</dbReference>
<dbReference type="InterPro" id="IPR032282">
    <property type="entry name" value="HAGH_C"/>
</dbReference>
<dbReference type="InterPro" id="IPR017782">
    <property type="entry name" value="Hydroxyacylglutathione_Hdrlase"/>
</dbReference>
<dbReference type="InterPro" id="IPR001279">
    <property type="entry name" value="Metallo-B-lactamas"/>
</dbReference>
<dbReference type="InterPro" id="IPR036866">
    <property type="entry name" value="RibonucZ/Hydroxyglut_hydro"/>
</dbReference>
<dbReference type="NCBIfam" id="TIGR03413">
    <property type="entry name" value="GSH_gloB"/>
    <property type="match status" value="1"/>
</dbReference>
<dbReference type="PANTHER" id="PTHR43705">
    <property type="entry name" value="HYDROXYACYLGLUTATHIONE HYDROLASE"/>
    <property type="match status" value="1"/>
</dbReference>
<dbReference type="PANTHER" id="PTHR43705:SF1">
    <property type="entry name" value="HYDROXYACYLGLUTATHIONE HYDROLASE GLOB"/>
    <property type="match status" value="1"/>
</dbReference>
<dbReference type="Pfam" id="PF16123">
    <property type="entry name" value="HAGH_C"/>
    <property type="match status" value="1"/>
</dbReference>
<dbReference type="Pfam" id="PF00753">
    <property type="entry name" value="Lactamase_B"/>
    <property type="match status" value="1"/>
</dbReference>
<dbReference type="PIRSF" id="PIRSF005457">
    <property type="entry name" value="Glx"/>
    <property type="match status" value="1"/>
</dbReference>
<dbReference type="SMART" id="SM00849">
    <property type="entry name" value="Lactamase_B"/>
    <property type="match status" value="1"/>
</dbReference>
<dbReference type="SUPFAM" id="SSF56281">
    <property type="entry name" value="Metallo-hydrolase/oxidoreductase"/>
    <property type="match status" value="1"/>
</dbReference>
<proteinExistence type="inferred from homology"/>
<feature type="chain" id="PRO_1000073456" description="Hydroxyacylglutathione hydrolase">
    <location>
        <begin position="1"/>
        <end position="252"/>
    </location>
</feature>
<feature type="binding site" evidence="1">
    <location>
        <position position="54"/>
    </location>
    <ligand>
        <name>Zn(2+)</name>
        <dbReference type="ChEBI" id="CHEBI:29105"/>
        <label>1</label>
    </ligand>
</feature>
<feature type="binding site" evidence="1">
    <location>
        <position position="56"/>
    </location>
    <ligand>
        <name>Zn(2+)</name>
        <dbReference type="ChEBI" id="CHEBI:29105"/>
        <label>1</label>
    </ligand>
</feature>
<feature type="binding site" evidence="1">
    <location>
        <position position="58"/>
    </location>
    <ligand>
        <name>Zn(2+)</name>
        <dbReference type="ChEBI" id="CHEBI:29105"/>
        <label>2</label>
    </ligand>
</feature>
<feature type="binding site" evidence="1">
    <location>
        <position position="59"/>
    </location>
    <ligand>
        <name>Zn(2+)</name>
        <dbReference type="ChEBI" id="CHEBI:29105"/>
        <label>2</label>
    </ligand>
</feature>
<feature type="binding site" evidence="1">
    <location>
        <position position="111"/>
    </location>
    <ligand>
        <name>Zn(2+)</name>
        <dbReference type="ChEBI" id="CHEBI:29105"/>
        <label>1</label>
    </ligand>
</feature>
<feature type="binding site" evidence="1">
    <location>
        <position position="128"/>
    </location>
    <ligand>
        <name>Zn(2+)</name>
        <dbReference type="ChEBI" id="CHEBI:29105"/>
        <label>1</label>
    </ligand>
</feature>
<feature type="binding site" evidence="1">
    <location>
        <position position="128"/>
    </location>
    <ligand>
        <name>Zn(2+)</name>
        <dbReference type="ChEBI" id="CHEBI:29105"/>
        <label>2</label>
    </ligand>
</feature>
<feature type="binding site" evidence="1">
    <location>
        <position position="166"/>
    </location>
    <ligand>
        <name>Zn(2+)</name>
        <dbReference type="ChEBI" id="CHEBI:29105"/>
        <label>2</label>
    </ligand>
</feature>
<protein>
    <recommendedName>
        <fullName evidence="1">Hydroxyacylglutathione hydrolase</fullName>
        <ecNumber evidence="1">3.1.2.6</ecNumber>
    </recommendedName>
    <alternativeName>
        <fullName evidence="1">Glyoxalase II</fullName>
        <shortName evidence="1">Glx II</shortName>
    </alternativeName>
</protein>
<comment type="function">
    <text evidence="1">Thiolesterase that catalyzes the hydrolysis of S-D-lactoyl-glutathione to form glutathione and D-lactic acid.</text>
</comment>
<comment type="catalytic activity">
    <reaction evidence="1">
        <text>an S-(2-hydroxyacyl)glutathione + H2O = a 2-hydroxy carboxylate + glutathione + H(+)</text>
        <dbReference type="Rhea" id="RHEA:21864"/>
        <dbReference type="ChEBI" id="CHEBI:15377"/>
        <dbReference type="ChEBI" id="CHEBI:15378"/>
        <dbReference type="ChEBI" id="CHEBI:57925"/>
        <dbReference type="ChEBI" id="CHEBI:58896"/>
        <dbReference type="ChEBI" id="CHEBI:71261"/>
        <dbReference type="EC" id="3.1.2.6"/>
    </reaction>
</comment>
<comment type="cofactor">
    <cofactor evidence="1">
        <name>Zn(2+)</name>
        <dbReference type="ChEBI" id="CHEBI:29105"/>
    </cofactor>
    <text evidence="1">Binds 2 Zn(2+) ions per subunit.</text>
</comment>
<comment type="pathway">
    <text evidence="1">Secondary metabolite metabolism; methylglyoxal degradation; (R)-lactate from methylglyoxal: step 2/2.</text>
</comment>
<comment type="subunit">
    <text evidence="1">Monomer.</text>
</comment>
<comment type="similarity">
    <text evidence="1">Belongs to the metallo-beta-lactamase superfamily. Glyoxalase II family.</text>
</comment>
<evidence type="ECO:0000255" key="1">
    <source>
        <dbReference type="HAMAP-Rule" id="MF_01374"/>
    </source>
</evidence>
<sequence>MLQIKSIPAFDDNYIWLIQNRDRDCAVVDPGSAEPVLAYLKQHDLNLKAVLITHHHHDHIGGVAELVHQFPEIHVVGPAQEPIPTLTHPVEDGDQIELFDERFMVLGLPGHTLGHIGYVGDGKLFCGDVLFSAGCGRVFEGTMEQMFSSLNKLLSLPEETQVYSAHEYTAANVAFALAVEPENEQLHIYRDEVSRLRAQNQPTLPTTLGREKWVNPFLRTQEPSVIRSVASQVSTLDPLTIFTALREWKNEF</sequence>
<accession>A5F635</accession>
<accession>C3M3J3</accession>
<gene>
    <name evidence="1" type="primary">gloB</name>
    <name type="ordered locus">VC0395_A1828</name>
    <name type="ordered locus">VC395_2352</name>
</gene>
<reference key="1">
    <citation type="submission" date="2007-03" db="EMBL/GenBank/DDBJ databases">
        <authorList>
            <person name="Heidelberg J."/>
        </authorList>
    </citation>
    <scope>NUCLEOTIDE SEQUENCE [LARGE SCALE GENOMIC DNA]</scope>
    <source>
        <strain>ATCC 39541 / Classical Ogawa 395 / O395</strain>
    </source>
</reference>
<reference key="2">
    <citation type="journal article" date="2008" name="PLoS ONE">
        <title>A recalibrated molecular clock and independent origins for the cholera pandemic clones.</title>
        <authorList>
            <person name="Feng L."/>
            <person name="Reeves P.R."/>
            <person name="Lan R."/>
            <person name="Ren Y."/>
            <person name="Gao C."/>
            <person name="Zhou Z."/>
            <person name="Ren Y."/>
            <person name="Cheng J."/>
            <person name="Wang W."/>
            <person name="Wang J."/>
            <person name="Qian W."/>
            <person name="Li D."/>
            <person name="Wang L."/>
        </authorList>
    </citation>
    <scope>NUCLEOTIDE SEQUENCE [LARGE SCALE GENOMIC DNA]</scope>
    <source>
        <strain>ATCC 39541 / Classical Ogawa 395 / O395</strain>
    </source>
</reference>
<organism>
    <name type="scientific">Vibrio cholerae serotype O1 (strain ATCC 39541 / Classical Ogawa 395 / O395)</name>
    <dbReference type="NCBI Taxonomy" id="345073"/>
    <lineage>
        <taxon>Bacteria</taxon>
        <taxon>Pseudomonadati</taxon>
        <taxon>Pseudomonadota</taxon>
        <taxon>Gammaproteobacteria</taxon>
        <taxon>Vibrionales</taxon>
        <taxon>Vibrionaceae</taxon>
        <taxon>Vibrio</taxon>
    </lineage>
</organism>
<name>GLO2_VIBC3</name>
<keyword id="KW-0378">Hydrolase</keyword>
<keyword id="KW-0479">Metal-binding</keyword>
<keyword id="KW-0862">Zinc</keyword>